<comment type="function">
    <text evidence="1">This is one of the proteins that binds to the 5S RNA in the ribosome where it forms part of the central protuberance.</text>
</comment>
<comment type="subunit">
    <text evidence="1">Part of the 50S ribosomal subunit; part of the 5S rRNA/L5/L18/L25 subcomplex. Contacts the 5S rRNA. Binds to the 5S rRNA independently of L5 and L18.</text>
</comment>
<comment type="similarity">
    <text evidence="1">Belongs to the bacterial ribosomal protein bL25 family.</text>
</comment>
<name>RL25_SHEHH</name>
<organism>
    <name type="scientific">Shewanella halifaxensis (strain HAW-EB4)</name>
    <dbReference type="NCBI Taxonomy" id="458817"/>
    <lineage>
        <taxon>Bacteria</taxon>
        <taxon>Pseudomonadati</taxon>
        <taxon>Pseudomonadota</taxon>
        <taxon>Gammaproteobacteria</taxon>
        <taxon>Alteromonadales</taxon>
        <taxon>Shewanellaceae</taxon>
        <taxon>Shewanella</taxon>
    </lineage>
</organism>
<gene>
    <name evidence="1" type="primary">rplY</name>
    <name type="ordered locus">Shal_2340</name>
</gene>
<sequence length="95" mass="10845">MSYTIAAQVRTEIGKGSSRRLRHANKVPAVIYGPGKEAISIVFDHKDIINIQENQDFYTSELTIALEGKDVKVRVQDMQRHAFKPMIEHVDFKFA</sequence>
<keyword id="KW-0687">Ribonucleoprotein</keyword>
<keyword id="KW-0689">Ribosomal protein</keyword>
<keyword id="KW-0694">RNA-binding</keyword>
<keyword id="KW-0699">rRNA-binding</keyword>
<reference key="1">
    <citation type="submission" date="2008-01" db="EMBL/GenBank/DDBJ databases">
        <title>Complete sequence of Shewanella halifaxensis HAW-EB4.</title>
        <authorList>
            <consortium name="US DOE Joint Genome Institute"/>
            <person name="Copeland A."/>
            <person name="Lucas S."/>
            <person name="Lapidus A."/>
            <person name="Glavina del Rio T."/>
            <person name="Dalin E."/>
            <person name="Tice H."/>
            <person name="Bruce D."/>
            <person name="Goodwin L."/>
            <person name="Pitluck S."/>
            <person name="Sims D."/>
            <person name="Brettin T."/>
            <person name="Detter J.C."/>
            <person name="Han C."/>
            <person name="Kuske C.R."/>
            <person name="Schmutz J."/>
            <person name="Larimer F."/>
            <person name="Land M."/>
            <person name="Hauser L."/>
            <person name="Kyrpides N."/>
            <person name="Kim E."/>
            <person name="Zhao J.-S."/>
            <person name="Richardson P."/>
        </authorList>
    </citation>
    <scope>NUCLEOTIDE SEQUENCE [LARGE SCALE GENOMIC DNA]</scope>
    <source>
        <strain>HAW-EB4</strain>
    </source>
</reference>
<feature type="chain" id="PRO_1000086644" description="Large ribosomal subunit protein bL25">
    <location>
        <begin position="1"/>
        <end position="95"/>
    </location>
</feature>
<evidence type="ECO:0000255" key="1">
    <source>
        <dbReference type="HAMAP-Rule" id="MF_01336"/>
    </source>
</evidence>
<evidence type="ECO:0000305" key="2"/>
<protein>
    <recommendedName>
        <fullName evidence="1">Large ribosomal subunit protein bL25</fullName>
    </recommendedName>
    <alternativeName>
        <fullName evidence="2">50S ribosomal protein L25</fullName>
    </alternativeName>
</protein>
<proteinExistence type="inferred from homology"/>
<dbReference type="EMBL" id="CP000931">
    <property type="protein sequence ID" value="ABZ76899.1"/>
    <property type="molecule type" value="Genomic_DNA"/>
</dbReference>
<dbReference type="RefSeq" id="WP_012277428.1">
    <property type="nucleotide sequence ID" value="NC_010334.1"/>
</dbReference>
<dbReference type="SMR" id="B0TIW4"/>
<dbReference type="STRING" id="458817.Shal_2340"/>
<dbReference type="KEGG" id="shl:Shal_2340"/>
<dbReference type="eggNOG" id="COG1825">
    <property type="taxonomic scope" value="Bacteria"/>
</dbReference>
<dbReference type="HOGENOM" id="CLU_137946_0_0_6"/>
<dbReference type="OrthoDB" id="9806411at2"/>
<dbReference type="Proteomes" id="UP000001317">
    <property type="component" value="Chromosome"/>
</dbReference>
<dbReference type="GO" id="GO:0022625">
    <property type="term" value="C:cytosolic large ribosomal subunit"/>
    <property type="evidence" value="ECO:0007669"/>
    <property type="project" value="TreeGrafter"/>
</dbReference>
<dbReference type="GO" id="GO:0008097">
    <property type="term" value="F:5S rRNA binding"/>
    <property type="evidence" value="ECO:0007669"/>
    <property type="project" value="InterPro"/>
</dbReference>
<dbReference type="GO" id="GO:0003735">
    <property type="term" value="F:structural constituent of ribosome"/>
    <property type="evidence" value="ECO:0007669"/>
    <property type="project" value="InterPro"/>
</dbReference>
<dbReference type="GO" id="GO:0006412">
    <property type="term" value="P:translation"/>
    <property type="evidence" value="ECO:0007669"/>
    <property type="project" value="UniProtKB-UniRule"/>
</dbReference>
<dbReference type="CDD" id="cd00495">
    <property type="entry name" value="Ribosomal_L25_TL5_CTC"/>
    <property type="match status" value="1"/>
</dbReference>
<dbReference type="FunFam" id="2.40.240.10:FF:000002">
    <property type="entry name" value="50S ribosomal protein L25"/>
    <property type="match status" value="1"/>
</dbReference>
<dbReference type="Gene3D" id="2.40.240.10">
    <property type="entry name" value="Ribosomal Protein L25, Chain P"/>
    <property type="match status" value="1"/>
</dbReference>
<dbReference type="HAMAP" id="MF_01336">
    <property type="entry name" value="Ribosomal_bL25"/>
    <property type="match status" value="1"/>
</dbReference>
<dbReference type="InterPro" id="IPR020056">
    <property type="entry name" value="Rbsml_bL25/Gln-tRNA_synth_N"/>
</dbReference>
<dbReference type="InterPro" id="IPR011035">
    <property type="entry name" value="Ribosomal_bL25/Gln-tRNA_synth"/>
</dbReference>
<dbReference type="InterPro" id="IPR020055">
    <property type="entry name" value="Ribosomal_bL25_short"/>
</dbReference>
<dbReference type="InterPro" id="IPR029751">
    <property type="entry name" value="Ribosomal_L25_dom"/>
</dbReference>
<dbReference type="InterPro" id="IPR020930">
    <property type="entry name" value="Ribosomal_uL5_bac-type"/>
</dbReference>
<dbReference type="NCBIfam" id="NF004612">
    <property type="entry name" value="PRK05943.1"/>
    <property type="match status" value="1"/>
</dbReference>
<dbReference type="PANTHER" id="PTHR33284">
    <property type="entry name" value="RIBOSOMAL PROTEIN L25/GLN-TRNA SYNTHETASE, ANTI-CODON-BINDING DOMAIN-CONTAINING PROTEIN"/>
    <property type="match status" value="1"/>
</dbReference>
<dbReference type="PANTHER" id="PTHR33284:SF1">
    <property type="entry name" value="RIBOSOMAL PROTEIN L25_GLN-TRNA SYNTHETASE, ANTI-CODON-BINDING DOMAIN-CONTAINING PROTEIN"/>
    <property type="match status" value="1"/>
</dbReference>
<dbReference type="Pfam" id="PF01386">
    <property type="entry name" value="Ribosomal_L25p"/>
    <property type="match status" value="1"/>
</dbReference>
<dbReference type="SUPFAM" id="SSF50715">
    <property type="entry name" value="Ribosomal protein L25-like"/>
    <property type="match status" value="1"/>
</dbReference>
<accession>B0TIW4</accession>